<keyword id="KW-0413">Isomerase</keyword>
<keyword id="KW-0460">Magnesium</keyword>
<keyword id="KW-0479">Metal-binding</keyword>
<keyword id="KW-0597">Phosphoprotein</keyword>
<organism>
    <name type="scientific">Shewanella sp. (strain MR-7)</name>
    <dbReference type="NCBI Taxonomy" id="60481"/>
    <lineage>
        <taxon>Bacteria</taxon>
        <taxon>Pseudomonadati</taxon>
        <taxon>Pseudomonadota</taxon>
        <taxon>Gammaproteobacteria</taxon>
        <taxon>Alteromonadales</taxon>
        <taxon>Shewanellaceae</taxon>
        <taxon>Shewanella</taxon>
    </lineage>
</organism>
<proteinExistence type="inferred from homology"/>
<dbReference type="EC" id="5.4.2.10" evidence="1"/>
<dbReference type="EMBL" id="CP000444">
    <property type="protein sequence ID" value="ABI42085.1"/>
    <property type="molecule type" value="Genomic_DNA"/>
</dbReference>
<dbReference type="SMR" id="Q0HXS0"/>
<dbReference type="KEGG" id="shm:Shewmr7_1086"/>
<dbReference type="HOGENOM" id="CLU_016950_7_0_6"/>
<dbReference type="GO" id="GO:0005829">
    <property type="term" value="C:cytosol"/>
    <property type="evidence" value="ECO:0007669"/>
    <property type="project" value="TreeGrafter"/>
</dbReference>
<dbReference type="GO" id="GO:0000287">
    <property type="term" value="F:magnesium ion binding"/>
    <property type="evidence" value="ECO:0007669"/>
    <property type="project" value="UniProtKB-UniRule"/>
</dbReference>
<dbReference type="GO" id="GO:0008966">
    <property type="term" value="F:phosphoglucosamine mutase activity"/>
    <property type="evidence" value="ECO:0007669"/>
    <property type="project" value="UniProtKB-UniRule"/>
</dbReference>
<dbReference type="GO" id="GO:0004615">
    <property type="term" value="F:phosphomannomutase activity"/>
    <property type="evidence" value="ECO:0007669"/>
    <property type="project" value="TreeGrafter"/>
</dbReference>
<dbReference type="GO" id="GO:0005975">
    <property type="term" value="P:carbohydrate metabolic process"/>
    <property type="evidence" value="ECO:0007669"/>
    <property type="project" value="InterPro"/>
</dbReference>
<dbReference type="GO" id="GO:0009252">
    <property type="term" value="P:peptidoglycan biosynthetic process"/>
    <property type="evidence" value="ECO:0007669"/>
    <property type="project" value="TreeGrafter"/>
</dbReference>
<dbReference type="GO" id="GO:0006048">
    <property type="term" value="P:UDP-N-acetylglucosamine biosynthetic process"/>
    <property type="evidence" value="ECO:0007669"/>
    <property type="project" value="TreeGrafter"/>
</dbReference>
<dbReference type="CDD" id="cd05802">
    <property type="entry name" value="GlmM"/>
    <property type="match status" value="1"/>
</dbReference>
<dbReference type="FunFam" id="3.30.310.50:FF:000001">
    <property type="entry name" value="Phosphoglucosamine mutase"/>
    <property type="match status" value="1"/>
</dbReference>
<dbReference type="FunFam" id="3.40.120.10:FF:000001">
    <property type="entry name" value="Phosphoglucosamine mutase"/>
    <property type="match status" value="1"/>
</dbReference>
<dbReference type="FunFam" id="3.40.120.10:FF:000003">
    <property type="entry name" value="Phosphoglucosamine mutase"/>
    <property type="match status" value="1"/>
</dbReference>
<dbReference type="Gene3D" id="3.40.120.10">
    <property type="entry name" value="Alpha-D-Glucose-1,6-Bisphosphate, subunit A, domain 3"/>
    <property type="match status" value="3"/>
</dbReference>
<dbReference type="Gene3D" id="3.30.310.50">
    <property type="entry name" value="Alpha-D-phosphohexomutase, C-terminal domain"/>
    <property type="match status" value="1"/>
</dbReference>
<dbReference type="HAMAP" id="MF_01554_B">
    <property type="entry name" value="GlmM_B"/>
    <property type="match status" value="1"/>
</dbReference>
<dbReference type="InterPro" id="IPR005844">
    <property type="entry name" value="A-D-PHexomutase_a/b/a-I"/>
</dbReference>
<dbReference type="InterPro" id="IPR016055">
    <property type="entry name" value="A-D-PHexomutase_a/b/a-I/II/III"/>
</dbReference>
<dbReference type="InterPro" id="IPR005845">
    <property type="entry name" value="A-D-PHexomutase_a/b/a-II"/>
</dbReference>
<dbReference type="InterPro" id="IPR005846">
    <property type="entry name" value="A-D-PHexomutase_a/b/a-III"/>
</dbReference>
<dbReference type="InterPro" id="IPR005843">
    <property type="entry name" value="A-D-PHexomutase_C"/>
</dbReference>
<dbReference type="InterPro" id="IPR036900">
    <property type="entry name" value="A-D-PHexomutase_C_sf"/>
</dbReference>
<dbReference type="InterPro" id="IPR016066">
    <property type="entry name" value="A-D-PHexomutase_CS"/>
</dbReference>
<dbReference type="InterPro" id="IPR005841">
    <property type="entry name" value="Alpha-D-phosphohexomutase_SF"/>
</dbReference>
<dbReference type="InterPro" id="IPR006352">
    <property type="entry name" value="GlmM_bact"/>
</dbReference>
<dbReference type="InterPro" id="IPR050060">
    <property type="entry name" value="Phosphoglucosamine_mutase"/>
</dbReference>
<dbReference type="NCBIfam" id="TIGR01455">
    <property type="entry name" value="glmM"/>
    <property type="match status" value="1"/>
</dbReference>
<dbReference type="NCBIfam" id="NF008139">
    <property type="entry name" value="PRK10887.1"/>
    <property type="match status" value="1"/>
</dbReference>
<dbReference type="PANTHER" id="PTHR42946:SF1">
    <property type="entry name" value="PHOSPHOGLUCOMUTASE (ALPHA-D-GLUCOSE-1,6-BISPHOSPHATE-DEPENDENT)"/>
    <property type="match status" value="1"/>
</dbReference>
<dbReference type="PANTHER" id="PTHR42946">
    <property type="entry name" value="PHOSPHOHEXOSE MUTASE"/>
    <property type="match status" value="1"/>
</dbReference>
<dbReference type="Pfam" id="PF02878">
    <property type="entry name" value="PGM_PMM_I"/>
    <property type="match status" value="1"/>
</dbReference>
<dbReference type="Pfam" id="PF02879">
    <property type="entry name" value="PGM_PMM_II"/>
    <property type="match status" value="1"/>
</dbReference>
<dbReference type="Pfam" id="PF02880">
    <property type="entry name" value="PGM_PMM_III"/>
    <property type="match status" value="1"/>
</dbReference>
<dbReference type="Pfam" id="PF00408">
    <property type="entry name" value="PGM_PMM_IV"/>
    <property type="match status" value="1"/>
</dbReference>
<dbReference type="PRINTS" id="PR00509">
    <property type="entry name" value="PGMPMM"/>
</dbReference>
<dbReference type="SUPFAM" id="SSF55957">
    <property type="entry name" value="Phosphoglucomutase, C-terminal domain"/>
    <property type="match status" value="1"/>
</dbReference>
<dbReference type="SUPFAM" id="SSF53738">
    <property type="entry name" value="Phosphoglucomutase, first 3 domains"/>
    <property type="match status" value="3"/>
</dbReference>
<dbReference type="PROSITE" id="PS00710">
    <property type="entry name" value="PGM_PMM"/>
    <property type="match status" value="1"/>
</dbReference>
<evidence type="ECO:0000255" key="1">
    <source>
        <dbReference type="HAMAP-Rule" id="MF_01554"/>
    </source>
</evidence>
<name>GLMM1_SHESR</name>
<gene>
    <name evidence="1" type="primary">glmM1</name>
    <name type="ordered locus">Shewmr7_1086</name>
</gene>
<comment type="function">
    <text evidence="1">Catalyzes the conversion of glucosamine-6-phosphate to glucosamine-1-phosphate.</text>
</comment>
<comment type="catalytic activity">
    <reaction evidence="1">
        <text>alpha-D-glucosamine 1-phosphate = D-glucosamine 6-phosphate</text>
        <dbReference type="Rhea" id="RHEA:23424"/>
        <dbReference type="ChEBI" id="CHEBI:58516"/>
        <dbReference type="ChEBI" id="CHEBI:58725"/>
        <dbReference type="EC" id="5.4.2.10"/>
    </reaction>
</comment>
<comment type="cofactor">
    <cofactor evidence="1">
        <name>Mg(2+)</name>
        <dbReference type="ChEBI" id="CHEBI:18420"/>
    </cofactor>
    <text evidence="1">Binds 1 Mg(2+) ion per subunit.</text>
</comment>
<comment type="PTM">
    <text evidence="1">Activated by phosphorylation.</text>
</comment>
<comment type="similarity">
    <text evidence="1">Belongs to the phosphohexose mutase family.</text>
</comment>
<reference key="1">
    <citation type="submission" date="2006-08" db="EMBL/GenBank/DDBJ databases">
        <title>Complete sequence of chromosome 1 of Shewanella sp. MR-7.</title>
        <authorList>
            <person name="Copeland A."/>
            <person name="Lucas S."/>
            <person name="Lapidus A."/>
            <person name="Barry K."/>
            <person name="Detter J.C."/>
            <person name="Glavina del Rio T."/>
            <person name="Hammon N."/>
            <person name="Israni S."/>
            <person name="Dalin E."/>
            <person name="Tice H."/>
            <person name="Pitluck S."/>
            <person name="Kiss H."/>
            <person name="Brettin T."/>
            <person name="Bruce D."/>
            <person name="Han C."/>
            <person name="Tapia R."/>
            <person name="Gilna P."/>
            <person name="Schmutz J."/>
            <person name="Larimer F."/>
            <person name="Land M."/>
            <person name="Hauser L."/>
            <person name="Kyrpides N."/>
            <person name="Mikhailova N."/>
            <person name="Nealson K."/>
            <person name="Konstantinidis K."/>
            <person name="Klappenbach J."/>
            <person name="Tiedje J."/>
            <person name="Richardson P."/>
        </authorList>
    </citation>
    <scope>NUCLEOTIDE SEQUENCE [LARGE SCALE GENOMIC DNA]</scope>
    <source>
        <strain>MR-7</strain>
    </source>
</reference>
<sequence>MSERKFFGTDGIRGKVGSGQMTPELALKLGWAAGRVLSRSGTNKVIIGKDTRISGYMFESALEAGLSAAGLNVMLMGPMPTPAVAYLTRTFRAEAGVVISASHNPYYDNGIKFFSNDGSKLDDNLELEIEAELEKPLECVESHLLGKVSRIEDARGRYIEYCKGNFPADQTLTGLKIVVDCAHGATYHIAPAVFRELGAEVIAIGDKPNGVNINDKVGATSMAKICETVLTEGADLGIALDGDGDRIMMVNSRGEVIDGDQILYILACDAKARGVLRGGVVGTLMSNLGLDLALQALDIPFARSKVGDRYVMELLKELDWRIGGENSGHILNLDHGTTGDGIVAGILVLAAMRRQNATLEQLTAPMEMLPQVLVNVRFEGEHDPLSSDKVKAAQAQVESQLGARGRVLLRKSGTEPLIRVMVEGDDHNTVLAHANLIADAVKSAS</sequence>
<feature type="chain" id="PRO_0000305677" description="Phosphoglucosamine mutase 1">
    <location>
        <begin position="1"/>
        <end position="445"/>
    </location>
</feature>
<feature type="active site" description="Phosphoserine intermediate" evidence="1">
    <location>
        <position position="102"/>
    </location>
</feature>
<feature type="binding site" description="via phosphate group" evidence="1">
    <location>
        <position position="102"/>
    </location>
    <ligand>
        <name>Mg(2+)</name>
        <dbReference type="ChEBI" id="CHEBI:18420"/>
    </ligand>
</feature>
<feature type="binding site" evidence="1">
    <location>
        <position position="241"/>
    </location>
    <ligand>
        <name>Mg(2+)</name>
        <dbReference type="ChEBI" id="CHEBI:18420"/>
    </ligand>
</feature>
<feature type="binding site" evidence="1">
    <location>
        <position position="243"/>
    </location>
    <ligand>
        <name>Mg(2+)</name>
        <dbReference type="ChEBI" id="CHEBI:18420"/>
    </ligand>
</feature>
<feature type="binding site" evidence="1">
    <location>
        <position position="245"/>
    </location>
    <ligand>
        <name>Mg(2+)</name>
        <dbReference type="ChEBI" id="CHEBI:18420"/>
    </ligand>
</feature>
<feature type="modified residue" description="Phosphoserine" evidence="1">
    <location>
        <position position="102"/>
    </location>
</feature>
<protein>
    <recommendedName>
        <fullName evidence="1">Phosphoglucosamine mutase 1</fullName>
        <ecNumber evidence="1">5.4.2.10</ecNumber>
    </recommendedName>
</protein>
<accession>Q0HXS0</accession>